<sequence length="532" mass="59965">MSVLAGVEASGIARNYVFKNWAGIYSARPRLYFQPRSEDEVVAIVRAAREQGRTIVTVGSGHSPSDMCATDDWMVNLDRLNGVLELQEDEQGRYADVTVAAGIRVYELHRYLSARGYALQNLGSISEQSVGGIISTGTHGSSPYHGLVSSQYVNLTLVNGRGELVFLDSEHEPEVFRAAMLSLGKLGIIVRATIRVVPAFNIHSTQEVINFETLLDNWETIWTSSEFIRCWWYPYVRKCVLWRGVKTSEPAEKSRSSWWGTTLGRLVYESLLWLTVNVYPSLTPFVERFIFRQQYGKVETFGNGDEAVQTSIDGLNMDCLFSQFVDEWACPLNNGPEVLRSLDHSIAQAAQNKEFFVHVPIEVRCSNTTLPHEYKCPEDRTVTAPGPVYGNLLRPYLDNTPSHLRYAPLSDVTNSQLTLYINATIYRPFGTNTPIHKWFTLFEDTLGAAGGKPHWAKNFLGSTATAAGPVKSSDEYQDYEMRGMATKIKEWYGDNLKQFQKVRREQDPHNVFIANKDWAVKNGIIDIDELDS</sequence>
<protein>
    <recommendedName>
        <fullName>D-arabinono-1,4-lactone oxidase</fullName>
        <shortName>ALO</shortName>
        <ecNumber>1.1.3.37</ecNumber>
    </recommendedName>
    <alternativeName>
        <fullName>L-galactono-gamma-lactone oxidase</fullName>
    </alternativeName>
</protein>
<comment type="catalytic activity">
    <reaction>
        <text>D-arabinono-1,4-lactone + O2 = dehydro-D-arabinono-1,4-lactone + H2O2 + H(+)</text>
        <dbReference type="Rhea" id="RHEA:23756"/>
        <dbReference type="ChEBI" id="CHEBI:15378"/>
        <dbReference type="ChEBI" id="CHEBI:15379"/>
        <dbReference type="ChEBI" id="CHEBI:16240"/>
        <dbReference type="ChEBI" id="CHEBI:16292"/>
        <dbReference type="ChEBI" id="CHEBI:58277"/>
        <dbReference type="EC" id="1.1.3.37"/>
    </reaction>
</comment>
<comment type="cofactor">
    <cofactor evidence="1">
        <name>FAD</name>
        <dbReference type="ChEBI" id="CHEBI:57692"/>
    </cofactor>
</comment>
<comment type="pathway">
    <text>Cofactor biosynthesis; D-erythroascorbate biosynthesis; dehydro-D-arabinono-1,4-lactone from D-arabinose: step 2/2.</text>
</comment>
<comment type="subcellular location">
    <subcellularLocation>
        <location evidence="1">Mitochondrion membrane</location>
    </subcellularLocation>
    <text evidence="1">Membrane-embedded.</text>
</comment>
<comment type="similarity">
    <text evidence="3">Belongs to the oxygen-dependent FAD-linked oxidoreductase family.</text>
</comment>
<proteinExistence type="inferred from homology"/>
<reference key="1">
    <citation type="journal article" date="2004" name="Science">
        <title>The Ashbya gossypii genome as a tool for mapping the ancient Saccharomyces cerevisiae genome.</title>
        <authorList>
            <person name="Dietrich F.S."/>
            <person name="Voegeli S."/>
            <person name="Brachat S."/>
            <person name="Lerch A."/>
            <person name="Gates K."/>
            <person name="Steiner S."/>
            <person name="Mohr C."/>
            <person name="Poehlmann R."/>
            <person name="Luedi P."/>
            <person name="Choi S."/>
            <person name="Wing R.A."/>
            <person name="Flavier A."/>
            <person name="Gaffney T.D."/>
            <person name="Philippsen P."/>
        </authorList>
    </citation>
    <scope>NUCLEOTIDE SEQUENCE [LARGE SCALE GENOMIC DNA]</scope>
    <source>
        <strain>ATCC 10895 / CBS 109.51 / FGSC 9923 / NRRL Y-1056</strain>
    </source>
</reference>
<reference key="2">
    <citation type="journal article" date="2013" name="G3 (Bethesda)">
        <title>Genomes of Ashbya fungi isolated from insects reveal four mating-type loci, numerous translocations, lack of transposons, and distinct gene duplications.</title>
        <authorList>
            <person name="Dietrich F.S."/>
            <person name="Voegeli S."/>
            <person name="Kuo S."/>
            <person name="Philippsen P."/>
        </authorList>
    </citation>
    <scope>GENOME REANNOTATION</scope>
    <source>
        <strain>ATCC 10895 / CBS 109.51 / FGSC 9923 / NRRL Y-1056</strain>
    </source>
</reference>
<keyword id="KW-0274">FAD</keyword>
<keyword id="KW-0285">Flavoprotein</keyword>
<keyword id="KW-0472">Membrane</keyword>
<keyword id="KW-0496">Mitochondrion</keyword>
<keyword id="KW-0560">Oxidoreductase</keyword>
<keyword id="KW-1185">Reference proteome</keyword>
<accession>Q752Y3</accession>
<feature type="chain" id="PRO_0000128163" description="D-arabinono-1,4-lactone oxidase">
    <location>
        <begin position="1"/>
        <end position="532"/>
    </location>
</feature>
<feature type="domain" description="FAD-binding PCMH-type" evidence="2">
    <location>
        <begin position="25"/>
        <end position="199"/>
    </location>
</feature>
<feature type="modified residue" description="Pros-8alpha-FAD histidine" evidence="1">
    <location>
        <position position="62"/>
    </location>
</feature>
<name>ALO_EREGS</name>
<evidence type="ECO:0000250" key="1"/>
<evidence type="ECO:0000255" key="2">
    <source>
        <dbReference type="PROSITE-ProRule" id="PRU00718"/>
    </source>
</evidence>
<evidence type="ECO:0000305" key="3"/>
<organism>
    <name type="scientific">Eremothecium gossypii (strain ATCC 10895 / CBS 109.51 / FGSC 9923 / NRRL Y-1056)</name>
    <name type="common">Yeast</name>
    <name type="synonym">Ashbya gossypii</name>
    <dbReference type="NCBI Taxonomy" id="284811"/>
    <lineage>
        <taxon>Eukaryota</taxon>
        <taxon>Fungi</taxon>
        <taxon>Dikarya</taxon>
        <taxon>Ascomycota</taxon>
        <taxon>Saccharomycotina</taxon>
        <taxon>Saccharomycetes</taxon>
        <taxon>Saccharomycetales</taxon>
        <taxon>Saccharomycetaceae</taxon>
        <taxon>Eremothecium</taxon>
    </lineage>
</organism>
<gene>
    <name type="primary">ALO1</name>
    <name type="ordered locus">AFR440C</name>
</gene>
<dbReference type="EC" id="1.1.3.37"/>
<dbReference type="EMBL" id="AE016819">
    <property type="protein sequence ID" value="AAS53811.1"/>
    <property type="molecule type" value="Genomic_DNA"/>
</dbReference>
<dbReference type="RefSeq" id="NP_985987.1">
    <property type="nucleotide sequence ID" value="NM_211342.1"/>
</dbReference>
<dbReference type="SMR" id="Q752Y3"/>
<dbReference type="FunCoup" id="Q752Y3">
    <property type="interactions" value="86"/>
</dbReference>
<dbReference type="STRING" id="284811.Q752Y3"/>
<dbReference type="EnsemblFungi" id="AAS53811">
    <property type="protein sequence ID" value="AAS53811"/>
    <property type="gene ID" value="AGOS_AFR440C"/>
</dbReference>
<dbReference type="GeneID" id="4622264"/>
<dbReference type="KEGG" id="ago:AGOS_AFR440C"/>
<dbReference type="eggNOG" id="KOG4730">
    <property type="taxonomic scope" value="Eukaryota"/>
</dbReference>
<dbReference type="HOGENOM" id="CLU_003896_4_1_1"/>
<dbReference type="InParanoid" id="Q752Y3"/>
<dbReference type="OMA" id="YPRFGEF"/>
<dbReference type="OrthoDB" id="610608at2759"/>
<dbReference type="UniPathway" id="UPA00771">
    <property type="reaction ID" value="UER00766"/>
</dbReference>
<dbReference type="Proteomes" id="UP000000591">
    <property type="component" value="Chromosome VI"/>
</dbReference>
<dbReference type="GO" id="GO:0031966">
    <property type="term" value="C:mitochondrial membrane"/>
    <property type="evidence" value="ECO:0007669"/>
    <property type="project" value="UniProtKB-SubCell"/>
</dbReference>
<dbReference type="GO" id="GO:0005739">
    <property type="term" value="C:mitochondrion"/>
    <property type="evidence" value="ECO:0000318"/>
    <property type="project" value="GO_Central"/>
</dbReference>
<dbReference type="GO" id="GO:0003885">
    <property type="term" value="F:D-arabinono-1,4-lactone oxidase activity"/>
    <property type="evidence" value="ECO:0000318"/>
    <property type="project" value="GO_Central"/>
</dbReference>
<dbReference type="GO" id="GO:0071949">
    <property type="term" value="F:FAD binding"/>
    <property type="evidence" value="ECO:0007669"/>
    <property type="project" value="InterPro"/>
</dbReference>
<dbReference type="FunFam" id="3.30.465.10:FF:000042">
    <property type="entry name" value="D-arabinono-1,4-lactone oxidase"/>
    <property type="match status" value="1"/>
</dbReference>
<dbReference type="Gene3D" id="3.30.465.10">
    <property type="match status" value="1"/>
</dbReference>
<dbReference type="Gene3D" id="3.30.43.10">
    <property type="entry name" value="Uridine Diphospho-n-acetylenolpyruvylglucosamine Reductase, domain 2"/>
    <property type="match status" value="1"/>
</dbReference>
<dbReference type="InterPro" id="IPR007173">
    <property type="entry name" value="ALO_C"/>
</dbReference>
<dbReference type="InterPro" id="IPR016166">
    <property type="entry name" value="FAD-bd_PCMH"/>
</dbReference>
<dbReference type="InterPro" id="IPR036318">
    <property type="entry name" value="FAD-bd_PCMH-like_sf"/>
</dbReference>
<dbReference type="InterPro" id="IPR016167">
    <property type="entry name" value="FAD-bd_PCMH_sub1"/>
</dbReference>
<dbReference type="InterPro" id="IPR016169">
    <property type="entry name" value="FAD-bd_PCMH_sub2"/>
</dbReference>
<dbReference type="InterPro" id="IPR010031">
    <property type="entry name" value="FAD_lactone_oxidase-like"/>
</dbReference>
<dbReference type="InterPro" id="IPR006094">
    <property type="entry name" value="Oxid_FAD_bind_N"/>
</dbReference>
<dbReference type="InterPro" id="IPR006093">
    <property type="entry name" value="Oxy_OxRdtase_FAD_BS"/>
</dbReference>
<dbReference type="InterPro" id="IPR030654">
    <property type="entry name" value="Sugar_lactone_oxidase"/>
</dbReference>
<dbReference type="NCBIfam" id="TIGR01678">
    <property type="entry name" value="FAD_lactone_ox"/>
    <property type="match status" value="1"/>
</dbReference>
<dbReference type="PANTHER" id="PTHR43762:SF1">
    <property type="entry name" value="D-ARABINONO-1,4-LACTONE OXIDASE"/>
    <property type="match status" value="1"/>
</dbReference>
<dbReference type="PANTHER" id="PTHR43762">
    <property type="entry name" value="L-GULONOLACTONE OXIDASE"/>
    <property type="match status" value="1"/>
</dbReference>
<dbReference type="Pfam" id="PF04030">
    <property type="entry name" value="ALO"/>
    <property type="match status" value="1"/>
</dbReference>
<dbReference type="Pfam" id="PF01565">
    <property type="entry name" value="FAD_binding_4"/>
    <property type="match status" value="1"/>
</dbReference>
<dbReference type="PIRSF" id="PIRSF000136">
    <property type="entry name" value="LGO_GLO"/>
    <property type="match status" value="1"/>
</dbReference>
<dbReference type="SUPFAM" id="SSF56176">
    <property type="entry name" value="FAD-binding/transporter-associated domain-like"/>
    <property type="match status" value="1"/>
</dbReference>
<dbReference type="PROSITE" id="PS51387">
    <property type="entry name" value="FAD_PCMH"/>
    <property type="match status" value="1"/>
</dbReference>
<dbReference type="PROSITE" id="PS00862">
    <property type="entry name" value="OX2_COVAL_FAD"/>
    <property type="match status" value="1"/>
</dbReference>